<feature type="signal peptide" evidence="1">
    <location>
        <begin position="1"/>
        <end position="23"/>
    </location>
</feature>
<feature type="chain" id="PRO_0000408714" description="Altered inheritance of mitochondria protein 6">
    <location>
        <begin position="24"/>
        <end position="407"/>
    </location>
</feature>
<protein>
    <recommendedName>
        <fullName>Altered inheritance of mitochondria protein 6</fullName>
    </recommendedName>
</protein>
<gene>
    <name type="primary">AIM6</name>
    <name type="ordered locus">ZYRO0F15268g</name>
</gene>
<evidence type="ECO:0000255" key="1"/>
<evidence type="ECO:0000305" key="2"/>
<dbReference type="EMBL" id="CU928178">
    <property type="protein sequence ID" value="CAR28930.1"/>
    <property type="molecule type" value="Genomic_DNA"/>
</dbReference>
<dbReference type="RefSeq" id="XP_002497863.1">
    <property type="nucleotide sequence ID" value="XM_002497818.1"/>
</dbReference>
<dbReference type="FunCoup" id="C5DYR9">
    <property type="interactions" value="19"/>
</dbReference>
<dbReference type="GeneID" id="8205792"/>
<dbReference type="KEGG" id="zro:ZYRO0F15268g"/>
<dbReference type="HOGENOM" id="CLU_031561_1_1_1"/>
<dbReference type="InParanoid" id="C5DYR9"/>
<dbReference type="Proteomes" id="UP000008536">
    <property type="component" value="Chromosome F"/>
</dbReference>
<dbReference type="GO" id="GO:0008081">
    <property type="term" value="F:phosphoric diester hydrolase activity"/>
    <property type="evidence" value="ECO:0007669"/>
    <property type="project" value="InterPro"/>
</dbReference>
<dbReference type="GO" id="GO:0006629">
    <property type="term" value="P:lipid metabolic process"/>
    <property type="evidence" value="ECO:0007669"/>
    <property type="project" value="InterPro"/>
</dbReference>
<dbReference type="InterPro" id="IPR051236">
    <property type="entry name" value="HAT_RTT109-like"/>
</dbReference>
<dbReference type="InterPro" id="IPR017946">
    <property type="entry name" value="PLC-like_Pdiesterase_TIM-brl"/>
</dbReference>
<dbReference type="PANTHER" id="PTHR31571">
    <property type="entry name" value="ALTERED INHERITANCE OF MITOCHONDRIA PROTEIN 6"/>
    <property type="match status" value="1"/>
</dbReference>
<dbReference type="PANTHER" id="PTHR31571:SF1">
    <property type="entry name" value="ALTERED INHERITANCE OF MITOCHONDRIA PROTEIN 6"/>
    <property type="match status" value="1"/>
</dbReference>
<dbReference type="SUPFAM" id="SSF51695">
    <property type="entry name" value="PLC-like phosphodiesterases"/>
    <property type="match status" value="1"/>
</dbReference>
<accession>C5DYR9</accession>
<sequence length="407" mass="45867">MNGVKSWTVTLVFYFLILAVLIANLDGSSSLFGIIPKRANSSQKPPHLHLQQLGITGSRLLRFFQDNLLEFEGASSLPGDEQPGISLYYDSFKKYLYDAPHGPPRPLECNPDKSIVAKLTKDVQPIPVHSHNDYWRDLPLFQGIAHGAISTEADVWIYPKPTNADTPEDEYILAVGHNEVFLDPVHRTLDGLYTGPLADMLDQVNCVEGHKSGVFYDSPEDTLFFYIDFKSQETHLLYKLLMDKYLKPLMDKGYLTYFDLESKKLVWNQITVILTGDFPKDLGVIDNGENGYYNDNKRYAFQEANILEPTALEPNASVVSTSSLSNLLEKCGYNERSILSQGQMDNSLTKCIKSLISQSHEAGLRTRIWGVPNWPVSFATNLWHQQVENLGVDLLNVDNLDLAQSIF</sequence>
<proteinExistence type="inferred from homology"/>
<keyword id="KW-1185">Reference proteome</keyword>
<keyword id="KW-0732">Signal</keyword>
<organism>
    <name type="scientific">Zygosaccharomyces rouxii (strain ATCC 2623 / CBS 732 / NBRC 1130 / NCYC 568 / NRRL Y-229)</name>
    <dbReference type="NCBI Taxonomy" id="559307"/>
    <lineage>
        <taxon>Eukaryota</taxon>
        <taxon>Fungi</taxon>
        <taxon>Dikarya</taxon>
        <taxon>Ascomycota</taxon>
        <taxon>Saccharomycotina</taxon>
        <taxon>Saccharomycetes</taxon>
        <taxon>Saccharomycetales</taxon>
        <taxon>Saccharomycetaceae</taxon>
        <taxon>Zygosaccharomyces</taxon>
    </lineage>
</organism>
<reference key="1">
    <citation type="journal article" date="2009" name="Genome Res.">
        <title>Comparative genomics of protoploid Saccharomycetaceae.</title>
        <authorList>
            <consortium name="The Genolevures Consortium"/>
            <person name="Souciet J.-L."/>
            <person name="Dujon B."/>
            <person name="Gaillardin C."/>
            <person name="Johnston M."/>
            <person name="Baret P.V."/>
            <person name="Cliften P."/>
            <person name="Sherman D.J."/>
            <person name="Weissenbach J."/>
            <person name="Westhof E."/>
            <person name="Wincker P."/>
            <person name="Jubin C."/>
            <person name="Poulain J."/>
            <person name="Barbe V."/>
            <person name="Segurens B."/>
            <person name="Artiguenave F."/>
            <person name="Anthouard V."/>
            <person name="Vacherie B."/>
            <person name="Val M.-E."/>
            <person name="Fulton R.S."/>
            <person name="Minx P."/>
            <person name="Wilson R."/>
            <person name="Durrens P."/>
            <person name="Jean G."/>
            <person name="Marck C."/>
            <person name="Martin T."/>
            <person name="Nikolski M."/>
            <person name="Rolland T."/>
            <person name="Seret M.-L."/>
            <person name="Casaregola S."/>
            <person name="Despons L."/>
            <person name="Fairhead C."/>
            <person name="Fischer G."/>
            <person name="Lafontaine I."/>
            <person name="Leh V."/>
            <person name="Lemaire M."/>
            <person name="de Montigny J."/>
            <person name="Neuveglise C."/>
            <person name="Thierry A."/>
            <person name="Blanc-Lenfle I."/>
            <person name="Bleykasten C."/>
            <person name="Diffels J."/>
            <person name="Fritsch E."/>
            <person name="Frangeul L."/>
            <person name="Goeffon A."/>
            <person name="Jauniaux N."/>
            <person name="Kachouri-Lafond R."/>
            <person name="Payen C."/>
            <person name="Potier S."/>
            <person name="Pribylova L."/>
            <person name="Ozanne C."/>
            <person name="Richard G.-F."/>
            <person name="Sacerdot C."/>
            <person name="Straub M.-L."/>
            <person name="Talla E."/>
        </authorList>
    </citation>
    <scope>NUCLEOTIDE SEQUENCE [LARGE SCALE GENOMIC DNA]</scope>
    <source>
        <strain>ATCC 2623 / CBS 732 / BCRC 21506 / NBRC 1130 / NCYC 568 / NRRL Y-229</strain>
    </source>
</reference>
<comment type="similarity">
    <text evidence="2">Belongs to the AIM6 family.</text>
</comment>
<name>AIM6_ZYGRC</name>